<feature type="chain" id="PRO_1000120684" description="Small ribosomal subunit protein bS21">
    <location>
        <begin position="1"/>
        <end position="71"/>
    </location>
</feature>
<feature type="region of interest" description="Disordered" evidence="2">
    <location>
        <begin position="43"/>
        <end position="71"/>
    </location>
</feature>
<feature type="compositionally biased region" description="Basic residues" evidence="2">
    <location>
        <begin position="46"/>
        <end position="59"/>
    </location>
</feature>
<feature type="compositionally biased region" description="Basic and acidic residues" evidence="2">
    <location>
        <begin position="60"/>
        <end position="71"/>
    </location>
</feature>
<gene>
    <name evidence="1" type="primary">rpsU</name>
    <name type="ordered locus">YPK_0636</name>
</gene>
<accession>B1JM17</accession>
<comment type="similarity">
    <text evidence="1">Belongs to the bacterial ribosomal protein bS21 family.</text>
</comment>
<evidence type="ECO:0000255" key="1">
    <source>
        <dbReference type="HAMAP-Rule" id="MF_00358"/>
    </source>
</evidence>
<evidence type="ECO:0000256" key="2">
    <source>
        <dbReference type="SAM" id="MobiDB-lite"/>
    </source>
</evidence>
<evidence type="ECO:0000305" key="3"/>
<dbReference type="EMBL" id="CP000950">
    <property type="protein sequence ID" value="ACA66939.1"/>
    <property type="molecule type" value="Genomic_DNA"/>
</dbReference>
<dbReference type="RefSeq" id="WP_001144069.1">
    <property type="nucleotide sequence ID" value="NZ_CP009792.1"/>
</dbReference>
<dbReference type="SMR" id="B1JM17"/>
<dbReference type="GeneID" id="98390195"/>
<dbReference type="KEGG" id="ypy:YPK_0636"/>
<dbReference type="PATRIC" id="fig|502800.11.peg.1253"/>
<dbReference type="GO" id="GO:1990904">
    <property type="term" value="C:ribonucleoprotein complex"/>
    <property type="evidence" value="ECO:0007669"/>
    <property type="project" value="UniProtKB-KW"/>
</dbReference>
<dbReference type="GO" id="GO:0005840">
    <property type="term" value="C:ribosome"/>
    <property type="evidence" value="ECO:0007669"/>
    <property type="project" value="UniProtKB-KW"/>
</dbReference>
<dbReference type="GO" id="GO:0003735">
    <property type="term" value="F:structural constituent of ribosome"/>
    <property type="evidence" value="ECO:0007669"/>
    <property type="project" value="InterPro"/>
</dbReference>
<dbReference type="GO" id="GO:0006412">
    <property type="term" value="P:translation"/>
    <property type="evidence" value="ECO:0007669"/>
    <property type="project" value="UniProtKB-UniRule"/>
</dbReference>
<dbReference type="FunFam" id="1.20.5.1150:FF:000001">
    <property type="entry name" value="30S ribosomal protein S21"/>
    <property type="match status" value="1"/>
</dbReference>
<dbReference type="Gene3D" id="1.20.5.1150">
    <property type="entry name" value="Ribosomal protein S8"/>
    <property type="match status" value="1"/>
</dbReference>
<dbReference type="HAMAP" id="MF_00358">
    <property type="entry name" value="Ribosomal_bS21"/>
    <property type="match status" value="1"/>
</dbReference>
<dbReference type="InterPro" id="IPR001911">
    <property type="entry name" value="Ribosomal_bS21"/>
</dbReference>
<dbReference type="InterPro" id="IPR018278">
    <property type="entry name" value="Ribosomal_bS21_CS"/>
</dbReference>
<dbReference type="InterPro" id="IPR038380">
    <property type="entry name" value="Ribosomal_bS21_sf"/>
</dbReference>
<dbReference type="NCBIfam" id="TIGR00030">
    <property type="entry name" value="S21p"/>
    <property type="match status" value="1"/>
</dbReference>
<dbReference type="PANTHER" id="PTHR21109">
    <property type="entry name" value="MITOCHONDRIAL 28S RIBOSOMAL PROTEIN S21"/>
    <property type="match status" value="1"/>
</dbReference>
<dbReference type="PANTHER" id="PTHR21109:SF22">
    <property type="entry name" value="SMALL RIBOSOMAL SUBUNIT PROTEIN BS21"/>
    <property type="match status" value="1"/>
</dbReference>
<dbReference type="Pfam" id="PF01165">
    <property type="entry name" value="Ribosomal_S21"/>
    <property type="match status" value="1"/>
</dbReference>
<dbReference type="PRINTS" id="PR00976">
    <property type="entry name" value="RIBOSOMALS21"/>
</dbReference>
<dbReference type="PROSITE" id="PS01181">
    <property type="entry name" value="RIBOSOMAL_S21"/>
    <property type="match status" value="1"/>
</dbReference>
<sequence length="71" mass="8500">MPVIKVRENEPFDVALRRFKRSCEKAGVLAEVRRREFYEKPTTERKRAKASAVKRHAKKLARENARRTRLY</sequence>
<keyword id="KW-0687">Ribonucleoprotein</keyword>
<keyword id="KW-0689">Ribosomal protein</keyword>
<reference key="1">
    <citation type="submission" date="2008-02" db="EMBL/GenBank/DDBJ databases">
        <title>Complete sequence of Yersinia pseudotuberculosis YPIII.</title>
        <authorList>
            <consortium name="US DOE Joint Genome Institute"/>
            <person name="Copeland A."/>
            <person name="Lucas S."/>
            <person name="Lapidus A."/>
            <person name="Glavina del Rio T."/>
            <person name="Dalin E."/>
            <person name="Tice H."/>
            <person name="Bruce D."/>
            <person name="Goodwin L."/>
            <person name="Pitluck S."/>
            <person name="Munk A.C."/>
            <person name="Brettin T."/>
            <person name="Detter J.C."/>
            <person name="Han C."/>
            <person name="Tapia R."/>
            <person name="Schmutz J."/>
            <person name="Larimer F."/>
            <person name="Land M."/>
            <person name="Hauser L."/>
            <person name="Challacombe J.F."/>
            <person name="Green L."/>
            <person name="Lindler L.E."/>
            <person name="Nikolich M.P."/>
            <person name="Richardson P."/>
        </authorList>
    </citation>
    <scope>NUCLEOTIDE SEQUENCE [LARGE SCALE GENOMIC DNA]</scope>
    <source>
        <strain>YPIII</strain>
    </source>
</reference>
<protein>
    <recommendedName>
        <fullName evidence="1">Small ribosomal subunit protein bS21</fullName>
    </recommendedName>
    <alternativeName>
        <fullName evidence="3">30S ribosomal protein S21</fullName>
    </alternativeName>
</protein>
<proteinExistence type="inferred from homology"/>
<name>RS21_YERPY</name>
<organism>
    <name type="scientific">Yersinia pseudotuberculosis serotype O:3 (strain YPIII)</name>
    <dbReference type="NCBI Taxonomy" id="502800"/>
    <lineage>
        <taxon>Bacteria</taxon>
        <taxon>Pseudomonadati</taxon>
        <taxon>Pseudomonadota</taxon>
        <taxon>Gammaproteobacteria</taxon>
        <taxon>Enterobacterales</taxon>
        <taxon>Yersiniaceae</taxon>
        <taxon>Yersinia</taxon>
    </lineage>
</organism>